<reference key="1">
    <citation type="submission" date="2006-11" db="EMBL/GenBank/DDBJ databases">
        <title>Sequence of Campylobacter fetus subsp. fetus 82-40.</title>
        <authorList>
            <person name="Fouts D.E."/>
            <person name="Nelson K.E."/>
        </authorList>
    </citation>
    <scope>NUCLEOTIDE SEQUENCE [LARGE SCALE GENOMIC DNA]</scope>
    <source>
        <strain>82-40</strain>
    </source>
</reference>
<proteinExistence type="inferred from homology"/>
<comment type="function">
    <text evidence="1">Bifunctional enzyme that catalyzes the formation of 4-diphosphocytidyl-2-C-methyl-D-erythritol from CTP and 2-C-methyl-D-erythritol 4-phosphate (MEP) (IspD), and catalyzes the conversion of 4-diphosphocytidyl-2-C-methyl-D-erythritol 2-phosphate (CDP-ME2P) to 2-C-methyl-D-erythritol 2,4-cyclodiphosphate (ME-CPP) with a corresponding release of cytidine 5-monophosphate (CMP) (IspF).</text>
</comment>
<comment type="catalytic activity">
    <reaction evidence="1">
        <text>2-C-methyl-D-erythritol 4-phosphate + CTP + H(+) = 4-CDP-2-C-methyl-D-erythritol + diphosphate</text>
        <dbReference type="Rhea" id="RHEA:13429"/>
        <dbReference type="ChEBI" id="CHEBI:15378"/>
        <dbReference type="ChEBI" id="CHEBI:33019"/>
        <dbReference type="ChEBI" id="CHEBI:37563"/>
        <dbReference type="ChEBI" id="CHEBI:57823"/>
        <dbReference type="ChEBI" id="CHEBI:58262"/>
        <dbReference type="EC" id="2.7.7.60"/>
    </reaction>
</comment>
<comment type="catalytic activity">
    <reaction evidence="1">
        <text>4-CDP-2-C-methyl-D-erythritol 2-phosphate = 2-C-methyl-D-erythritol 2,4-cyclic diphosphate + CMP</text>
        <dbReference type="Rhea" id="RHEA:23864"/>
        <dbReference type="ChEBI" id="CHEBI:57919"/>
        <dbReference type="ChEBI" id="CHEBI:58483"/>
        <dbReference type="ChEBI" id="CHEBI:60377"/>
        <dbReference type="EC" id="4.6.1.12"/>
    </reaction>
</comment>
<comment type="cofactor">
    <cofactor evidence="1">
        <name>a divalent metal cation</name>
        <dbReference type="ChEBI" id="CHEBI:60240"/>
    </cofactor>
</comment>
<comment type="pathway">
    <text evidence="1">Isoprenoid biosynthesis; isopentenyl diphosphate biosynthesis via DXP pathway; isopentenyl diphosphate from 1-deoxy-D-xylulose 5-phosphate: step 2/6.</text>
</comment>
<comment type="pathway">
    <text evidence="1">Isoprenoid biosynthesis; isopentenyl diphosphate biosynthesis via DXP pathway; isopentenyl diphosphate from 1-deoxy-D-xylulose 5-phosphate: step 4/6.</text>
</comment>
<comment type="similarity">
    <text evidence="1">In the N-terminal section; belongs to the IspD/TarI cytidylyltransferase family. IspD subfamily.</text>
</comment>
<comment type="similarity">
    <text evidence="1">In the C-terminal section; belongs to the IspF family.</text>
</comment>
<protein>
    <recommendedName>
        <fullName evidence="1">Bifunctional enzyme IspD/IspF</fullName>
    </recommendedName>
    <domain>
        <recommendedName>
            <fullName evidence="1">2-C-methyl-D-erythritol 4-phosphate cytidylyltransferase</fullName>
            <ecNumber evidence="1">2.7.7.60</ecNumber>
        </recommendedName>
        <alternativeName>
            <fullName evidence="1">4-diphosphocytidyl-2C-methyl-D-erythritol synthase</fullName>
        </alternativeName>
        <alternativeName>
            <fullName evidence="1">MEP cytidylyltransferase</fullName>
            <shortName evidence="1">MCT</shortName>
        </alternativeName>
    </domain>
    <domain>
        <recommendedName>
            <fullName evidence="1">2-C-methyl-D-erythritol 2,4-cyclodiphosphate synthase</fullName>
            <shortName evidence="1">MECDP-synthase</shortName>
            <shortName evidence="1">MECPP-synthase</shortName>
            <shortName evidence="1">MECPS</shortName>
            <ecNumber evidence="1">4.6.1.12</ecNumber>
        </recommendedName>
    </domain>
</protein>
<evidence type="ECO:0000255" key="1">
    <source>
        <dbReference type="HAMAP-Rule" id="MF_01520"/>
    </source>
</evidence>
<sequence>MLDLSLIMLGAGNSTRFGLQSKKQWLRTGDDPLWLYATKNISSNYLFKDVIVVSNECEYMRKFSSHFKFIKGGETRQDSLRNAISNINSEFVMVSDIARADIPKELITKLIESAHNADCIVPALKISDSVIYQNEYINRDELKLIQTPQLSRTNMLKKALKTDNIFTDDSSAIKAIGGTVWYIEGDERAKKLTYKDDLKRLNLNSPSNDIFCGNGFDVHAFKEGDFITLCGVKIPYSKAFIAHSDGDVALHALCDALLGAASAPDIGELYPDNDSKFKDIDSKILLQNSVNLIRSIGFDIINADITIIAQSPKISPYKDAMAKIVADILGIPLHKVNIKATTTEHLGFIGRNEGIAANAIVNLKYFNWRNVL</sequence>
<accession>A0RN28</accession>
<keyword id="KW-0414">Isoprene biosynthesis</keyword>
<keyword id="KW-0456">Lyase</keyword>
<keyword id="KW-0479">Metal-binding</keyword>
<keyword id="KW-0511">Multifunctional enzyme</keyword>
<keyword id="KW-0548">Nucleotidyltransferase</keyword>
<keyword id="KW-0808">Transferase</keyword>
<name>ISPDF_CAMFF</name>
<organism>
    <name type="scientific">Campylobacter fetus subsp. fetus (strain 82-40)</name>
    <dbReference type="NCBI Taxonomy" id="360106"/>
    <lineage>
        <taxon>Bacteria</taxon>
        <taxon>Pseudomonadati</taxon>
        <taxon>Campylobacterota</taxon>
        <taxon>Epsilonproteobacteria</taxon>
        <taxon>Campylobacterales</taxon>
        <taxon>Campylobacteraceae</taxon>
        <taxon>Campylobacter</taxon>
    </lineage>
</organism>
<gene>
    <name evidence="1" type="primary">ispDF</name>
    <name type="ordered locus">CFF8240_0409</name>
</gene>
<feature type="chain" id="PRO_0000296741" description="Bifunctional enzyme IspD/IspF">
    <location>
        <begin position="1"/>
        <end position="372"/>
    </location>
</feature>
<feature type="region of interest" description="2-C-methyl-D-erythritol 4-phosphate cytidylyltransferase" evidence="1">
    <location>
        <begin position="1"/>
        <end position="210"/>
    </location>
</feature>
<feature type="region of interest" description="2-C-methyl-D-erythritol 2,4-cyclodiphosphate synthase" evidence="1">
    <location>
        <begin position="211"/>
        <end position="372"/>
    </location>
</feature>
<feature type="binding site" evidence="1">
    <location>
        <begin position="217"/>
        <end position="219"/>
    </location>
    <ligand>
        <name>4-CDP-2-C-methyl-D-erythritol 2-phosphate</name>
        <dbReference type="ChEBI" id="CHEBI:57919"/>
    </ligand>
</feature>
<feature type="binding site" evidence="1">
    <location>
        <position position="217"/>
    </location>
    <ligand>
        <name>a divalent metal cation</name>
        <dbReference type="ChEBI" id="CHEBI:60240"/>
    </ligand>
</feature>
<feature type="binding site" evidence="1">
    <location>
        <position position="219"/>
    </location>
    <ligand>
        <name>a divalent metal cation</name>
        <dbReference type="ChEBI" id="CHEBI:60240"/>
    </ligand>
</feature>
<feature type="binding site" evidence="1">
    <location>
        <begin position="243"/>
        <end position="244"/>
    </location>
    <ligand>
        <name>4-CDP-2-C-methyl-D-erythritol 2-phosphate</name>
        <dbReference type="ChEBI" id="CHEBI:57919"/>
    </ligand>
</feature>
<feature type="binding site" evidence="1">
    <location>
        <position position="251"/>
    </location>
    <ligand>
        <name>a divalent metal cation</name>
        <dbReference type="ChEBI" id="CHEBI:60240"/>
    </ligand>
</feature>
<feature type="binding site" evidence="1">
    <location>
        <begin position="265"/>
        <end position="267"/>
    </location>
    <ligand>
        <name>4-CDP-2-C-methyl-D-erythritol 2-phosphate</name>
        <dbReference type="ChEBI" id="CHEBI:57919"/>
    </ligand>
</feature>
<feature type="binding site" evidence="1">
    <location>
        <begin position="270"/>
        <end position="274"/>
    </location>
    <ligand>
        <name>4-CDP-2-C-methyl-D-erythritol 2-phosphate</name>
        <dbReference type="ChEBI" id="CHEBI:57919"/>
    </ligand>
</feature>
<feature type="binding site" evidence="1">
    <location>
        <begin position="341"/>
        <end position="344"/>
    </location>
    <ligand>
        <name>4-CDP-2-C-methyl-D-erythritol 2-phosphate</name>
        <dbReference type="ChEBI" id="CHEBI:57919"/>
    </ligand>
</feature>
<feature type="binding site" evidence="1">
    <location>
        <position position="348"/>
    </location>
    <ligand>
        <name>4-CDP-2-C-methyl-D-erythritol 2-phosphate</name>
        <dbReference type="ChEBI" id="CHEBI:57919"/>
    </ligand>
</feature>
<feature type="binding site" evidence="1">
    <location>
        <position position="351"/>
    </location>
    <ligand>
        <name>4-CDP-2-C-methyl-D-erythritol 2-phosphate</name>
        <dbReference type="ChEBI" id="CHEBI:57919"/>
    </ligand>
</feature>
<feature type="site" description="Transition state stabilizer" evidence="1">
    <location>
        <position position="16"/>
    </location>
</feature>
<feature type="site" description="Transition state stabilizer" evidence="1">
    <location>
        <position position="23"/>
    </location>
</feature>
<feature type="site" description="Positions MEP for the nucleophilic attack" evidence="1">
    <location>
        <position position="139"/>
    </location>
</feature>
<feature type="site" description="Positions MEP for the nucleophilic attack" evidence="1">
    <location>
        <position position="191"/>
    </location>
</feature>
<feature type="site" description="Transition state stabilizer" evidence="1">
    <location>
        <position position="243"/>
    </location>
</feature>
<feature type="site" description="Transition state stabilizer" evidence="1">
    <location>
        <position position="342"/>
    </location>
</feature>
<dbReference type="EC" id="2.7.7.60" evidence="1"/>
<dbReference type="EC" id="4.6.1.12" evidence="1"/>
<dbReference type="EMBL" id="CP000487">
    <property type="protein sequence ID" value="ABK81838.1"/>
    <property type="molecule type" value="Genomic_DNA"/>
</dbReference>
<dbReference type="RefSeq" id="WP_002848609.1">
    <property type="nucleotide sequence ID" value="NC_008599.1"/>
</dbReference>
<dbReference type="SMR" id="A0RN28"/>
<dbReference type="KEGG" id="cff:CFF8240_0409"/>
<dbReference type="eggNOG" id="COG0245">
    <property type="taxonomic scope" value="Bacteria"/>
</dbReference>
<dbReference type="eggNOG" id="COG1211">
    <property type="taxonomic scope" value="Bacteria"/>
</dbReference>
<dbReference type="HOGENOM" id="CLU_042800_2_6_7"/>
<dbReference type="UniPathway" id="UPA00056">
    <property type="reaction ID" value="UER00093"/>
</dbReference>
<dbReference type="UniPathway" id="UPA00056">
    <property type="reaction ID" value="UER00095"/>
</dbReference>
<dbReference type="Proteomes" id="UP000000760">
    <property type="component" value="Chromosome"/>
</dbReference>
<dbReference type="GO" id="GO:0008685">
    <property type="term" value="F:2-C-methyl-D-erythritol 2,4-cyclodiphosphate synthase activity"/>
    <property type="evidence" value="ECO:0007669"/>
    <property type="project" value="UniProtKB-UniRule"/>
</dbReference>
<dbReference type="GO" id="GO:0050518">
    <property type="term" value="F:2-C-methyl-D-erythritol 4-phosphate cytidylyltransferase activity"/>
    <property type="evidence" value="ECO:0007669"/>
    <property type="project" value="UniProtKB-UniRule"/>
</dbReference>
<dbReference type="GO" id="GO:0046872">
    <property type="term" value="F:metal ion binding"/>
    <property type="evidence" value="ECO:0007669"/>
    <property type="project" value="UniProtKB-KW"/>
</dbReference>
<dbReference type="GO" id="GO:0019288">
    <property type="term" value="P:isopentenyl diphosphate biosynthetic process, methylerythritol 4-phosphate pathway"/>
    <property type="evidence" value="ECO:0007669"/>
    <property type="project" value="UniProtKB-UniRule"/>
</dbReference>
<dbReference type="GO" id="GO:0016114">
    <property type="term" value="P:terpenoid biosynthetic process"/>
    <property type="evidence" value="ECO:0007669"/>
    <property type="project" value="InterPro"/>
</dbReference>
<dbReference type="CDD" id="cd02516">
    <property type="entry name" value="CDP-ME_synthetase"/>
    <property type="match status" value="1"/>
</dbReference>
<dbReference type="CDD" id="cd00554">
    <property type="entry name" value="MECDP_synthase"/>
    <property type="match status" value="1"/>
</dbReference>
<dbReference type="Gene3D" id="3.30.1330.50">
    <property type="entry name" value="2-C-methyl-D-erythritol 2,4-cyclodiphosphate synthase"/>
    <property type="match status" value="1"/>
</dbReference>
<dbReference type="Gene3D" id="3.90.550.10">
    <property type="entry name" value="Spore Coat Polysaccharide Biosynthesis Protein SpsA, Chain A"/>
    <property type="match status" value="1"/>
</dbReference>
<dbReference type="HAMAP" id="MF_01520">
    <property type="entry name" value="IspDF"/>
    <property type="match status" value="1"/>
</dbReference>
<dbReference type="HAMAP" id="MF_00107">
    <property type="entry name" value="IspF"/>
    <property type="match status" value="1"/>
</dbReference>
<dbReference type="InterPro" id="IPR001228">
    <property type="entry name" value="IspD"/>
</dbReference>
<dbReference type="InterPro" id="IPR026596">
    <property type="entry name" value="IspD/F"/>
</dbReference>
<dbReference type="InterPro" id="IPR034683">
    <property type="entry name" value="IspD/TarI"/>
</dbReference>
<dbReference type="InterPro" id="IPR003526">
    <property type="entry name" value="MECDP_synthase"/>
</dbReference>
<dbReference type="InterPro" id="IPR020555">
    <property type="entry name" value="MECDP_synthase_CS"/>
</dbReference>
<dbReference type="InterPro" id="IPR036571">
    <property type="entry name" value="MECDP_synthase_sf"/>
</dbReference>
<dbReference type="InterPro" id="IPR029044">
    <property type="entry name" value="Nucleotide-diphossugar_trans"/>
</dbReference>
<dbReference type="NCBIfam" id="TIGR00453">
    <property type="entry name" value="ispD"/>
    <property type="match status" value="1"/>
</dbReference>
<dbReference type="NCBIfam" id="TIGR00151">
    <property type="entry name" value="ispF"/>
    <property type="match status" value="1"/>
</dbReference>
<dbReference type="NCBIfam" id="NF006899">
    <property type="entry name" value="PRK09382.1"/>
    <property type="match status" value="1"/>
</dbReference>
<dbReference type="PANTHER" id="PTHR43181">
    <property type="entry name" value="2-C-METHYL-D-ERYTHRITOL 2,4-CYCLODIPHOSPHATE SYNTHASE, CHLOROPLASTIC"/>
    <property type="match status" value="1"/>
</dbReference>
<dbReference type="PANTHER" id="PTHR43181:SF1">
    <property type="entry name" value="2-C-METHYL-D-ERYTHRITOL 2,4-CYCLODIPHOSPHATE SYNTHASE, CHLOROPLASTIC"/>
    <property type="match status" value="1"/>
</dbReference>
<dbReference type="Pfam" id="PF01128">
    <property type="entry name" value="IspD"/>
    <property type="match status" value="1"/>
</dbReference>
<dbReference type="Pfam" id="PF02542">
    <property type="entry name" value="YgbB"/>
    <property type="match status" value="1"/>
</dbReference>
<dbReference type="SUPFAM" id="SSF69765">
    <property type="entry name" value="IpsF-like"/>
    <property type="match status" value="1"/>
</dbReference>
<dbReference type="SUPFAM" id="SSF53448">
    <property type="entry name" value="Nucleotide-diphospho-sugar transferases"/>
    <property type="match status" value="1"/>
</dbReference>
<dbReference type="PROSITE" id="PS01350">
    <property type="entry name" value="ISPF"/>
    <property type="match status" value="1"/>
</dbReference>